<accession>B3CU37</accession>
<gene>
    <name type="ordered locus">OTT_1426</name>
</gene>
<evidence type="ECO:0000255" key="1">
    <source>
        <dbReference type="HAMAP-Rule" id="MF_00651"/>
    </source>
</evidence>
<protein>
    <recommendedName>
        <fullName evidence="1">Putative pre-16S rRNA nuclease</fullName>
        <ecNumber evidence="1">3.1.-.-</ecNumber>
    </recommendedName>
</protein>
<organism>
    <name type="scientific">Orientia tsutsugamushi (strain Ikeda)</name>
    <name type="common">Rickettsia tsutsugamushi</name>
    <dbReference type="NCBI Taxonomy" id="334380"/>
    <lineage>
        <taxon>Bacteria</taxon>
        <taxon>Pseudomonadati</taxon>
        <taxon>Pseudomonadota</taxon>
        <taxon>Alphaproteobacteria</taxon>
        <taxon>Rickettsiales</taxon>
        <taxon>Rickettsiaceae</taxon>
        <taxon>Rickettsieae</taxon>
        <taxon>Orientia</taxon>
    </lineage>
</organism>
<proteinExistence type="inferred from homology"/>
<keyword id="KW-0963">Cytoplasm</keyword>
<keyword id="KW-0378">Hydrolase</keyword>
<keyword id="KW-0540">Nuclease</keyword>
<keyword id="KW-0690">Ribosome biogenesis</keyword>
<feature type="chain" id="PRO_1000131053" description="Putative pre-16S rRNA nuclease">
    <location>
        <begin position="1"/>
        <end position="157"/>
    </location>
</feature>
<comment type="function">
    <text evidence="1">Could be a nuclease involved in processing of the 5'-end of pre-16S rRNA.</text>
</comment>
<comment type="subcellular location">
    <subcellularLocation>
        <location evidence="1">Cytoplasm</location>
    </subcellularLocation>
</comment>
<comment type="similarity">
    <text evidence="1">Belongs to the YqgF nuclease family.</text>
</comment>
<sequence length="157" mass="17483">MIINSIIEFLQAADIKKQILGIDFGEKKVGVAISNIEHTVAMPLQTIFATNQDRINKIQEIAVAYNIGAIVIGLPFKLDGTETSQTHRVKDFANKLANKLLLPIFLCDERLTSKAANNLLKMGNIKRKVRNAIDDRVAASIILEGTLKRMQNSKSYF</sequence>
<dbReference type="EC" id="3.1.-.-" evidence="1"/>
<dbReference type="EMBL" id="AP008981">
    <property type="protein sequence ID" value="BAG40884.1"/>
    <property type="molecule type" value="Genomic_DNA"/>
</dbReference>
<dbReference type="SMR" id="B3CU37"/>
<dbReference type="KEGG" id="ott:OTT_1426"/>
<dbReference type="HOGENOM" id="CLU_098240_2_2_5"/>
<dbReference type="OrthoDB" id="9796140at2"/>
<dbReference type="Proteomes" id="UP000001033">
    <property type="component" value="Chromosome"/>
</dbReference>
<dbReference type="GO" id="GO:0005829">
    <property type="term" value="C:cytosol"/>
    <property type="evidence" value="ECO:0007669"/>
    <property type="project" value="TreeGrafter"/>
</dbReference>
<dbReference type="GO" id="GO:0004518">
    <property type="term" value="F:nuclease activity"/>
    <property type="evidence" value="ECO:0007669"/>
    <property type="project" value="UniProtKB-KW"/>
</dbReference>
<dbReference type="GO" id="GO:0000967">
    <property type="term" value="P:rRNA 5'-end processing"/>
    <property type="evidence" value="ECO:0007669"/>
    <property type="project" value="UniProtKB-UniRule"/>
</dbReference>
<dbReference type="CDD" id="cd16964">
    <property type="entry name" value="YqgF"/>
    <property type="match status" value="1"/>
</dbReference>
<dbReference type="Gene3D" id="3.30.420.140">
    <property type="entry name" value="YqgF/RNase H-like domain"/>
    <property type="match status" value="1"/>
</dbReference>
<dbReference type="HAMAP" id="MF_00651">
    <property type="entry name" value="Nuclease_YqgF"/>
    <property type="match status" value="1"/>
</dbReference>
<dbReference type="InterPro" id="IPR012337">
    <property type="entry name" value="RNaseH-like_sf"/>
</dbReference>
<dbReference type="InterPro" id="IPR005227">
    <property type="entry name" value="YqgF"/>
</dbReference>
<dbReference type="InterPro" id="IPR006641">
    <property type="entry name" value="YqgF/RNaseH-like_dom"/>
</dbReference>
<dbReference type="InterPro" id="IPR037027">
    <property type="entry name" value="YqgF/RNaseH-like_dom_sf"/>
</dbReference>
<dbReference type="NCBIfam" id="TIGR00250">
    <property type="entry name" value="RNAse_H_YqgF"/>
    <property type="match status" value="1"/>
</dbReference>
<dbReference type="PANTHER" id="PTHR33317">
    <property type="entry name" value="POLYNUCLEOTIDYL TRANSFERASE, RIBONUCLEASE H-LIKE SUPERFAMILY PROTEIN"/>
    <property type="match status" value="1"/>
</dbReference>
<dbReference type="PANTHER" id="PTHR33317:SF4">
    <property type="entry name" value="POLYNUCLEOTIDYL TRANSFERASE, RIBONUCLEASE H-LIKE SUPERFAMILY PROTEIN"/>
    <property type="match status" value="1"/>
</dbReference>
<dbReference type="Pfam" id="PF03652">
    <property type="entry name" value="RuvX"/>
    <property type="match status" value="1"/>
</dbReference>
<dbReference type="SMART" id="SM00732">
    <property type="entry name" value="YqgFc"/>
    <property type="match status" value="1"/>
</dbReference>
<dbReference type="SUPFAM" id="SSF53098">
    <property type="entry name" value="Ribonuclease H-like"/>
    <property type="match status" value="1"/>
</dbReference>
<reference key="1">
    <citation type="journal article" date="2008" name="DNA Res.">
        <title>The whole-genome sequencing of the obligate intracellular bacterium Orientia tsutsugamushi revealed massive gene amplification during reductive genome evolution.</title>
        <authorList>
            <person name="Nakayama K."/>
            <person name="Yamashita A."/>
            <person name="Kurokawa K."/>
            <person name="Morimoto T."/>
            <person name="Ogawa M."/>
            <person name="Fukuhara M."/>
            <person name="Urakami H."/>
            <person name="Ohnishi M."/>
            <person name="Uchiyama I."/>
            <person name="Ogura Y."/>
            <person name="Ooka T."/>
            <person name="Oshima K."/>
            <person name="Tamura A."/>
            <person name="Hattori M."/>
            <person name="Hayashi T."/>
        </authorList>
    </citation>
    <scope>NUCLEOTIDE SEQUENCE [LARGE SCALE GENOMIC DNA]</scope>
    <source>
        <strain>Ikeda</strain>
    </source>
</reference>
<name>YQGF_ORITI</name>